<evidence type="ECO:0000255" key="1">
    <source>
        <dbReference type="PROSITE-ProRule" id="PRU00238"/>
    </source>
</evidence>
<feature type="chain" id="PRO_0000052870" description="Hemoglobin anodic subunit beta">
    <location>
        <begin position="1"/>
        <end position="147"/>
    </location>
</feature>
<feature type="domain" description="Globin" evidence="1">
    <location>
        <begin position="2"/>
        <end position="147"/>
    </location>
</feature>
<feature type="binding site" description="distal binding residue">
    <location>
        <position position="63"/>
    </location>
    <ligand>
        <name>heme b</name>
        <dbReference type="ChEBI" id="CHEBI:60344"/>
    </ligand>
    <ligandPart>
        <name>Fe</name>
        <dbReference type="ChEBI" id="CHEBI:18248"/>
    </ligandPart>
</feature>
<feature type="binding site" description="proximal binding residue">
    <location>
        <position position="92"/>
    </location>
    <ligand>
        <name>heme b</name>
        <dbReference type="ChEBI" id="CHEBI:60344"/>
    </ligand>
    <ligandPart>
        <name>Fe</name>
        <dbReference type="ChEBI" id="CHEBI:18248"/>
    </ligandPart>
</feature>
<comment type="function">
    <text>Involved in oxygen transport from gills to the various peripheral tissues.</text>
</comment>
<comment type="subunit">
    <text>Heterotetramer of two alpha chains and two beta chains.</text>
</comment>
<comment type="tissue specificity">
    <text>Red blood cells.</text>
</comment>
<comment type="miscellaneous">
    <text>This fish has two hemoglobins: cathodic and anodic. The cathodic Hb and anodic Hb display small and large Bohr effects respectively. In addition, the cathodic Hb displays a reverse Bohr effect and appreciable phosphate effects.</text>
</comment>
<comment type="similarity">
    <text evidence="1">Belongs to the globin family.</text>
</comment>
<accession>P80946</accession>
<keyword id="KW-0903">Direct protein sequencing</keyword>
<keyword id="KW-0349">Heme</keyword>
<keyword id="KW-0408">Iron</keyword>
<keyword id="KW-0479">Metal-binding</keyword>
<keyword id="KW-0561">Oxygen transport</keyword>
<keyword id="KW-0813">Transport</keyword>
<protein>
    <recommendedName>
        <fullName>Hemoglobin anodic subunit beta</fullName>
    </recommendedName>
    <alternativeName>
        <fullName>Hemoglobin anodic beta chain</fullName>
    </alternativeName>
</protein>
<organism>
    <name type="scientific">Anguilla anguilla</name>
    <name type="common">European freshwater eel</name>
    <name type="synonym">Muraena anguilla</name>
    <dbReference type="NCBI Taxonomy" id="7936"/>
    <lineage>
        <taxon>Eukaryota</taxon>
        <taxon>Metazoa</taxon>
        <taxon>Chordata</taxon>
        <taxon>Craniata</taxon>
        <taxon>Vertebrata</taxon>
        <taxon>Euteleostomi</taxon>
        <taxon>Actinopterygii</taxon>
        <taxon>Neopterygii</taxon>
        <taxon>Teleostei</taxon>
        <taxon>Anguilliformes</taxon>
        <taxon>Anguillidae</taxon>
        <taxon>Anguilla</taxon>
    </lineage>
</organism>
<sequence>VEWTEDERTAIKSKWLKINIEEIGPQAMRRLLIVCPWTQRHFANFGNLSTAAAIMNNDKVAKHGTTVMGGLDRAIQNMDDIKNAYRQLSVMHSEKLHVDPDNFRLLAEHITLCMAAKFGPTEFTADVQEAWQKFLMAVTSALARQYH</sequence>
<name>HBBA_ANGAN</name>
<gene>
    <name type="primary">hbb1</name>
</gene>
<reference key="1">
    <citation type="journal article" date="1997" name="J. Biol. Chem.">
        <title>The anodic hemoglobin of Anguilla anguilla. Molecular basis for allosteric effects in a root-effect hemoglobin.</title>
        <authorList>
            <person name="Fago A."/>
            <person name="Bendixen E."/>
            <person name="Malte H."/>
            <person name="Weber R.E."/>
        </authorList>
    </citation>
    <scope>PROTEIN SEQUENCE</scope>
    <source>
        <tissue>Erythrocyte</tissue>
    </source>
</reference>
<dbReference type="SMR" id="P80946"/>
<dbReference type="GO" id="GO:0072562">
    <property type="term" value="C:blood microparticle"/>
    <property type="evidence" value="ECO:0007669"/>
    <property type="project" value="TreeGrafter"/>
</dbReference>
<dbReference type="GO" id="GO:0031838">
    <property type="term" value="C:haptoglobin-hemoglobin complex"/>
    <property type="evidence" value="ECO:0007669"/>
    <property type="project" value="TreeGrafter"/>
</dbReference>
<dbReference type="GO" id="GO:0005833">
    <property type="term" value="C:hemoglobin complex"/>
    <property type="evidence" value="ECO:0007669"/>
    <property type="project" value="InterPro"/>
</dbReference>
<dbReference type="GO" id="GO:0031720">
    <property type="term" value="F:haptoglobin binding"/>
    <property type="evidence" value="ECO:0007669"/>
    <property type="project" value="TreeGrafter"/>
</dbReference>
<dbReference type="GO" id="GO:0020037">
    <property type="term" value="F:heme binding"/>
    <property type="evidence" value="ECO:0007669"/>
    <property type="project" value="InterPro"/>
</dbReference>
<dbReference type="GO" id="GO:0046872">
    <property type="term" value="F:metal ion binding"/>
    <property type="evidence" value="ECO:0007669"/>
    <property type="project" value="UniProtKB-KW"/>
</dbReference>
<dbReference type="GO" id="GO:0043177">
    <property type="term" value="F:organic acid binding"/>
    <property type="evidence" value="ECO:0007669"/>
    <property type="project" value="TreeGrafter"/>
</dbReference>
<dbReference type="GO" id="GO:0019825">
    <property type="term" value="F:oxygen binding"/>
    <property type="evidence" value="ECO:0007669"/>
    <property type="project" value="InterPro"/>
</dbReference>
<dbReference type="GO" id="GO:0005344">
    <property type="term" value="F:oxygen carrier activity"/>
    <property type="evidence" value="ECO:0007669"/>
    <property type="project" value="UniProtKB-KW"/>
</dbReference>
<dbReference type="GO" id="GO:0004601">
    <property type="term" value="F:peroxidase activity"/>
    <property type="evidence" value="ECO:0007669"/>
    <property type="project" value="TreeGrafter"/>
</dbReference>
<dbReference type="GO" id="GO:0042744">
    <property type="term" value="P:hydrogen peroxide catabolic process"/>
    <property type="evidence" value="ECO:0007669"/>
    <property type="project" value="TreeGrafter"/>
</dbReference>
<dbReference type="CDD" id="cd08925">
    <property type="entry name" value="Hb-beta-like"/>
    <property type="match status" value="1"/>
</dbReference>
<dbReference type="FunFam" id="1.10.490.10:FF:000001">
    <property type="entry name" value="Hemoglobin subunit beta"/>
    <property type="match status" value="1"/>
</dbReference>
<dbReference type="Gene3D" id="1.10.490.10">
    <property type="entry name" value="Globins"/>
    <property type="match status" value="1"/>
</dbReference>
<dbReference type="InterPro" id="IPR000971">
    <property type="entry name" value="Globin"/>
</dbReference>
<dbReference type="InterPro" id="IPR009050">
    <property type="entry name" value="Globin-like_sf"/>
</dbReference>
<dbReference type="InterPro" id="IPR012292">
    <property type="entry name" value="Globin/Proto"/>
</dbReference>
<dbReference type="InterPro" id="IPR002337">
    <property type="entry name" value="Hemoglobin_b"/>
</dbReference>
<dbReference type="InterPro" id="IPR050056">
    <property type="entry name" value="Hemoglobin_oxygen_transport"/>
</dbReference>
<dbReference type="PANTHER" id="PTHR11442">
    <property type="entry name" value="HEMOGLOBIN FAMILY MEMBER"/>
    <property type="match status" value="1"/>
</dbReference>
<dbReference type="PANTHER" id="PTHR11442:SF102">
    <property type="entry name" value="HEMOGLOBIN SUBUNIT BETA-1-RELATED"/>
    <property type="match status" value="1"/>
</dbReference>
<dbReference type="Pfam" id="PF00042">
    <property type="entry name" value="Globin"/>
    <property type="match status" value="1"/>
</dbReference>
<dbReference type="PRINTS" id="PR00814">
    <property type="entry name" value="BETAHAEM"/>
</dbReference>
<dbReference type="SUPFAM" id="SSF46458">
    <property type="entry name" value="Globin-like"/>
    <property type="match status" value="1"/>
</dbReference>
<dbReference type="PROSITE" id="PS01033">
    <property type="entry name" value="GLOBIN"/>
    <property type="match status" value="1"/>
</dbReference>
<proteinExistence type="evidence at protein level"/>